<name>NET2A_ARATH</name>
<accession>P0DMS1</accession>
<accession>Q9C6Q9</accession>
<gene>
    <name evidence="5" type="primary">NET2A</name>
    <name evidence="7" type="ordered locus">At1g58215</name>
    <name evidence="8" type="ORF">T18I24.12</name>
</gene>
<reference key="1">
    <citation type="journal article" date="2000" name="Nature">
        <title>Sequence and analysis of chromosome 1 of the plant Arabidopsis thaliana.</title>
        <authorList>
            <person name="Theologis A."/>
            <person name="Ecker J.R."/>
            <person name="Palm C.J."/>
            <person name="Federspiel N.A."/>
            <person name="Kaul S."/>
            <person name="White O."/>
            <person name="Alonso J."/>
            <person name="Altafi H."/>
            <person name="Araujo R."/>
            <person name="Bowman C.L."/>
            <person name="Brooks S.Y."/>
            <person name="Buehler E."/>
            <person name="Chan A."/>
            <person name="Chao Q."/>
            <person name="Chen H."/>
            <person name="Cheuk R.F."/>
            <person name="Chin C.W."/>
            <person name="Chung M.K."/>
            <person name="Conn L."/>
            <person name="Conway A.B."/>
            <person name="Conway A.R."/>
            <person name="Creasy T.H."/>
            <person name="Dewar K."/>
            <person name="Dunn P."/>
            <person name="Etgu P."/>
            <person name="Feldblyum T.V."/>
            <person name="Feng J.-D."/>
            <person name="Fong B."/>
            <person name="Fujii C.Y."/>
            <person name="Gill J.E."/>
            <person name="Goldsmith A.D."/>
            <person name="Haas B."/>
            <person name="Hansen N.F."/>
            <person name="Hughes B."/>
            <person name="Huizar L."/>
            <person name="Hunter J.L."/>
            <person name="Jenkins J."/>
            <person name="Johnson-Hopson C."/>
            <person name="Khan S."/>
            <person name="Khaykin E."/>
            <person name="Kim C.J."/>
            <person name="Koo H.L."/>
            <person name="Kremenetskaia I."/>
            <person name="Kurtz D.B."/>
            <person name="Kwan A."/>
            <person name="Lam B."/>
            <person name="Langin-Hooper S."/>
            <person name="Lee A."/>
            <person name="Lee J.M."/>
            <person name="Lenz C.A."/>
            <person name="Li J.H."/>
            <person name="Li Y.-P."/>
            <person name="Lin X."/>
            <person name="Liu S.X."/>
            <person name="Liu Z.A."/>
            <person name="Luros J.S."/>
            <person name="Maiti R."/>
            <person name="Marziali A."/>
            <person name="Militscher J."/>
            <person name="Miranda M."/>
            <person name="Nguyen M."/>
            <person name="Nierman W.C."/>
            <person name="Osborne B.I."/>
            <person name="Pai G."/>
            <person name="Peterson J."/>
            <person name="Pham P.K."/>
            <person name="Rizzo M."/>
            <person name="Rooney T."/>
            <person name="Rowley D."/>
            <person name="Sakano H."/>
            <person name="Salzberg S.L."/>
            <person name="Schwartz J.R."/>
            <person name="Shinn P."/>
            <person name="Southwick A.M."/>
            <person name="Sun H."/>
            <person name="Tallon L.J."/>
            <person name="Tambunga G."/>
            <person name="Toriumi M.J."/>
            <person name="Town C.D."/>
            <person name="Utterback T."/>
            <person name="Van Aken S."/>
            <person name="Vaysberg M."/>
            <person name="Vysotskaia V.S."/>
            <person name="Walker M."/>
            <person name="Wu D."/>
            <person name="Yu G."/>
            <person name="Fraser C.M."/>
            <person name="Venter J.C."/>
            <person name="Davis R.W."/>
        </authorList>
    </citation>
    <scope>NUCLEOTIDE SEQUENCE [LARGE SCALE GENOMIC DNA]</scope>
    <source>
        <strain>cv. Columbia</strain>
    </source>
</reference>
<reference key="2">
    <citation type="journal article" date="2017" name="Plant J.">
        <title>Araport11: a complete reannotation of the Arabidopsis thaliana reference genome.</title>
        <authorList>
            <person name="Cheng C.Y."/>
            <person name="Krishnakumar V."/>
            <person name="Chan A.P."/>
            <person name="Thibaud-Nissen F."/>
            <person name="Schobel S."/>
            <person name="Town C.D."/>
        </authorList>
    </citation>
    <scope>GENOME REANNOTATION</scope>
    <source>
        <strain>cv. Columbia</strain>
    </source>
</reference>
<reference key="3">
    <citation type="journal article" date="2012" name="Curr. Biol.">
        <title>A superfamily of actin-binding proteins at the actin-membrane nexus of higher plants.</title>
        <authorList>
            <person name="Deeks M.J."/>
            <person name="Calcutt J.R."/>
            <person name="Ingle E.K."/>
            <person name="Hawkins T.J."/>
            <person name="Chapman S."/>
            <person name="Richardson A.C."/>
            <person name="Mentlak D.A."/>
            <person name="Dixon M.R."/>
            <person name="Cartwright F."/>
            <person name="Smertenko A.P."/>
            <person name="Oparka K."/>
            <person name="Hussey P.J."/>
        </authorList>
    </citation>
    <scope>FUNCTION</scope>
    <scope>DOMAIN</scope>
    <scope>TISSUE SPECIFICITY</scope>
    <scope>SUBCELLULAR LOCATION</scope>
    <scope>GENE FAMILY</scope>
    <scope>NOMENCLATURE</scope>
</reference>
<reference key="4">
    <citation type="journal article" date="2014" name="Front. Plant Sci.">
        <title>The evolution of the actin binding NET superfamily.</title>
        <authorList>
            <person name="Hawkins T.J."/>
            <person name="Deeks M.J."/>
            <person name="Wang P."/>
            <person name="Hussey P.J."/>
        </authorList>
    </citation>
    <scope>GENE FAMILY</scope>
</reference>
<feature type="chain" id="PRO_0000431853" description="Protein NETWORKED 2A">
    <location>
        <begin position="1"/>
        <end position="947"/>
    </location>
</feature>
<feature type="domain" description="NAB" evidence="2">
    <location>
        <begin position="10"/>
        <end position="90"/>
    </location>
</feature>
<feature type="region of interest" description="Disordered" evidence="3">
    <location>
        <begin position="105"/>
        <end position="131"/>
    </location>
</feature>
<feature type="region of interest" description="Disordered" evidence="3">
    <location>
        <begin position="618"/>
        <end position="675"/>
    </location>
</feature>
<feature type="region of interest" description="Disordered" evidence="3">
    <location>
        <begin position="743"/>
        <end position="763"/>
    </location>
</feature>
<feature type="region of interest" description="Disordered" evidence="3">
    <location>
        <begin position="911"/>
        <end position="947"/>
    </location>
</feature>
<feature type="coiled-coil region" evidence="1">
    <location>
        <begin position="348"/>
        <end position="454"/>
    </location>
</feature>
<feature type="coiled-coil region" evidence="1">
    <location>
        <begin position="568"/>
        <end position="619"/>
    </location>
</feature>
<feature type="coiled-coil region" evidence="1">
    <location>
        <begin position="722"/>
        <end position="809"/>
    </location>
</feature>
<feature type="compositionally biased region" description="Acidic residues" evidence="3">
    <location>
        <begin position="109"/>
        <end position="118"/>
    </location>
</feature>
<feature type="compositionally biased region" description="Basic and acidic residues" evidence="3">
    <location>
        <begin position="618"/>
        <end position="627"/>
    </location>
</feature>
<feature type="compositionally biased region" description="Basic and acidic residues" evidence="3">
    <location>
        <begin position="635"/>
        <end position="644"/>
    </location>
</feature>
<feature type="compositionally biased region" description="Polar residues" evidence="3">
    <location>
        <begin position="645"/>
        <end position="660"/>
    </location>
</feature>
<feature type="compositionally biased region" description="Basic and acidic residues" evidence="3">
    <location>
        <begin position="662"/>
        <end position="675"/>
    </location>
</feature>
<feature type="compositionally biased region" description="Polar residues" evidence="3">
    <location>
        <begin position="749"/>
        <end position="761"/>
    </location>
</feature>
<feature type="compositionally biased region" description="Polar residues" evidence="3">
    <location>
        <begin position="915"/>
        <end position="927"/>
    </location>
</feature>
<organism>
    <name type="scientific">Arabidopsis thaliana</name>
    <name type="common">Mouse-ear cress</name>
    <dbReference type="NCBI Taxonomy" id="3702"/>
    <lineage>
        <taxon>Eukaryota</taxon>
        <taxon>Viridiplantae</taxon>
        <taxon>Streptophyta</taxon>
        <taxon>Embryophyta</taxon>
        <taxon>Tracheophyta</taxon>
        <taxon>Spermatophyta</taxon>
        <taxon>Magnoliopsida</taxon>
        <taxon>eudicotyledons</taxon>
        <taxon>Gunneridae</taxon>
        <taxon>Pentapetalae</taxon>
        <taxon>rosids</taxon>
        <taxon>malvids</taxon>
        <taxon>Brassicales</taxon>
        <taxon>Brassicaceae</taxon>
        <taxon>Camelineae</taxon>
        <taxon>Arabidopsis</taxon>
    </lineage>
</organism>
<evidence type="ECO:0000255" key="1"/>
<evidence type="ECO:0000255" key="2">
    <source>
        <dbReference type="PROSITE-ProRule" id="PRU01110"/>
    </source>
</evidence>
<evidence type="ECO:0000256" key="3">
    <source>
        <dbReference type="SAM" id="MobiDB-lite"/>
    </source>
</evidence>
<evidence type="ECO:0000269" key="4">
    <source>
    </source>
</evidence>
<evidence type="ECO:0000303" key="5">
    <source>
    </source>
</evidence>
<evidence type="ECO:0000305" key="6"/>
<evidence type="ECO:0000312" key="7">
    <source>
        <dbReference type="Araport" id="AT1G58215"/>
    </source>
</evidence>
<evidence type="ECO:0000312" key="8">
    <source>
        <dbReference type="EMBL" id="AAG50760.1"/>
    </source>
</evidence>
<comment type="function">
    <text evidence="4">Plant-specific actin binding protein. Associates with F-actin at the plasma membrane in growing pollen tubes. May be part of a membrane-cytoskeletal adapter complex.</text>
</comment>
<comment type="subcellular location">
    <subcellularLocation>
        <location evidence="4">Cell membrane</location>
    </subcellularLocation>
    <text evidence="4">In growing pollen tubes, forms foci at the plasma membrane, but not at the pollen tube tip.</text>
</comment>
<comment type="tissue specificity">
    <text evidence="4">Expressed specifically in pollen.</text>
</comment>
<comment type="domain">
    <text evidence="4">The NAB domain, also called NAB (NET actin-binding) domain, is sufficient for F-actin binding.</text>
</comment>
<comment type="similarity">
    <text evidence="6">Belongs to the NET family.</text>
</comment>
<comment type="sequence caution" evidence="6">
    <conflict type="erroneous gene model prediction">
        <sequence resource="EMBL-CDS" id="AAG50760"/>
    </conflict>
    <text>The predicted gene At1g58210 has been split into 2 genes: At1g58210 and At1g58215.</text>
</comment>
<protein>
    <recommendedName>
        <fullName evidence="5">Protein NETWORKED 2A</fullName>
    </recommendedName>
</protein>
<dbReference type="EMBL" id="AC079131">
    <property type="protein sequence ID" value="AAG50760.1"/>
    <property type="status" value="ALT_SEQ"/>
    <property type="molecule type" value="Genomic_DNA"/>
</dbReference>
<dbReference type="EMBL" id="CP002684">
    <property type="protein sequence ID" value="ANM59275.1"/>
    <property type="molecule type" value="Genomic_DNA"/>
</dbReference>
<dbReference type="RefSeq" id="NP_001321645.1">
    <property type="nucleotide sequence ID" value="NM_001333822.1"/>
</dbReference>
<dbReference type="SMR" id="P0DMS1"/>
<dbReference type="FunCoup" id="P0DMS1">
    <property type="interactions" value="85"/>
</dbReference>
<dbReference type="STRING" id="3702.P0DMS1"/>
<dbReference type="PaxDb" id="3702-AT1G58210.1"/>
<dbReference type="ProteomicsDB" id="250589"/>
<dbReference type="EnsemblPlants" id="AT1G58215.1">
    <property type="protein sequence ID" value="AT1G58215.1"/>
    <property type="gene ID" value="AT1G58215"/>
</dbReference>
<dbReference type="GeneID" id="842188"/>
<dbReference type="Gramene" id="AT1G58215.1">
    <property type="protein sequence ID" value="AT1G58215.1"/>
    <property type="gene ID" value="AT1G58215"/>
</dbReference>
<dbReference type="KEGG" id="ath:AT1G58215"/>
<dbReference type="Araport" id="AT1G58215"/>
<dbReference type="TAIR" id="AT1G58215"/>
<dbReference type="eggNOG" id="ENOG502QQVH">
    <property type="taxonomic scope" value="Eukaryota"/>
</dbReference>
<dbReference type="InParanoid" id="P0DMS1"/>
<dbReference type="OMA" id="WEFENEI"/>
<dbReference type="PRO" id="PR:P0DMS1"/>
<dbReference type="Proteomes" id="UP000006548">
    <property type="component" value="Chromosome 1"/>
</dbReference>
<dbReference type="ExpressionAtlas" id="P0DMS1">
    <property type="expression patterns" value="baseline and differential"/>
</dbReference>
<dbReference type="GO" id="GO:0005886">
    <property type="term" value="C:plasma membrane"/>
    <property type="evidence" value="ECO:0000314"/>
    <property type="project" value="UniProtKB"/>
</dbReference>
<dbReference type="GO" id="GO:0051015">
    <property type="term" value="F:actin filament binding"/>
    <property type="evidence" value="ECO:0000314"/>
    <property type="project" value="UniProtKB"/>
</dbReference>
<dbReference type="InterPro" id="IPR011684">
    <property type="entry name" value="NAB"/>
</dbReference>
<dbReference type="InterPro" id="IPR056889">
    <property type="entry name" value="NET2A-D/KIP1-like_C"/>
</dbReference>
<dbReference type="InterPro" id="IPR056888">
    <property type="entry name" value="NET2A-D/KIP1-like_dom"/>
</dbReference>
<dbReference type="PANTHER" id="PTHR31631:SF18">
    <property type="entry name" value="PROTEIN NETWORKED 2A"/>
    <property type="match status" value="1"/>
</dbReference>
<dbReference type="PANTHER" id="PTHR31631">
    <property type="entry name" value="PROTEIN NETWORKED 2D"/>
    <property type="match status" value="1"/>
</dbReference>
<dbReference type="Pfam" id="PF07765">
    <property type="entry name" value="KIP1"/>
    <property type="match status" value="1"/>
</dbReference>
<dbReference type="Pfam" id="PF25014">
    <property type="entry name" value="NET2A"/>
    <property type="match status" value="1"/>
</dbReference>
<dbReference type="Pfam" id="PF24918">
    <property type="entry name" value="NET2A_C"/>
    <property type="match status" value="1"/>
</dbReference>
<dbReference type="PROSITE" id="PS51774">
    <property type="entry name" value="NAB"/>
    <property type="match status" value="1"/>
</dbReference>
<keyword id="KW-1003">Cell membrane</keyword>
<keyword id="KW-0175">Coiled coil</keyword>
<keyword id="KW-0472">Membrane</keyword>
<keyword id="KW-1185">Reference proteome</keyword>
<sequence length="947" mass="108032">MLQRAASNAYSWWWASHIRTKQSKWLEHNLQDMEEKVEYTLKIIDEDGDTFAKRAEMYYRKRPEIVNFVEEAFRSYRALAERYDHLSRELQSANRTIATAFPEHVQFPLEDDSDENEDYDGRPRKPPKHLHLIPKGINIPEVPDIPKKKDFRSQSMMLSRKGPADLKRNVSSAQAKREAAIVRSGLSKEEGLEEIDKLQKGILALQTEKEFVRSSYEESYERYWDLENEVTEMQKSVCNLQDEFGLGASIDDSDARTLMASTALSSCRDTLAKLEEKQKISIEEAEIEKGRITTAKERFYALRNKFEKPESDVLDEVIRTDEEEEDVVQESSYESEREDSNENLTVVKLAEKIDDLVHRVVSLETNASSHTALVKTLRSETDELHEHIRGLEEDKAALVSDATVMKQRITVLEDELRNVRKLFQKVEDQNKNLQNQFKVANRTVDDLSGKIQDVKMDEDVEGAGIFQELPVVSGSEDSRDDLKSVSTEKTKKDVIAVKESEDGERAQEEKPEIKDSFALSETASTCFGTEAEDLVTEDEDEETPNWRHLLPDGMEDREKVLLDEYTSVLRDYREVKRKLGDVEKKNREGFFELALQLRELKNAVAYKDVEIQSLRQKLDTTGKDSPHQGEGNNQLEHEQGHHETVSISPTSNFSVATTPHHQVGDVKRTPGRTKSTEVRVKFADVDDSPRTKIPTVEDKVRADIDAVLEENLEFWLRFSTSVHQIQKYQTTVQDLKSELSKLRIESKQQQESPRSSSNTAVASEAKPIYRHLREIRTELQLWLENSAVLKDELQGRYASLANIQEEIARVTAQSGGNKVSDSEISGYQAAKFHGEILNMKQENKRVSTELHSGLDRVRALKTEVERILSKLEEDLGISSATEARTTPSKSSSSGRPRIPLRSFLFGVKLKKNRQQKQSASSLFSCVSPSPGLHKQSSYSRPPGKLPE</sequence>
<proteinExistence type="evidence at transcript level"/>